<protein>
    <recommendedName>
        <fullName evidence="1">Inner membrane-spanning protein YciB</fullName>
    </recommendedName>
</protein>
<organism>
    <name type="scientific">Burkholderia pseudomallei (strain 1106a)</name>
    <dbReference type="NCBI Taxonomy" id="357348"/>
    <lineage>
        <taxon>Bacteria</taxon>
        <taxon>Pseudomonadati</taxon>
        <taxon>Pseudomonadota</taxon>
        <taxon>Betaproteobacteria</taxon>
        <taxon>Burkholderiales</taxon>
        <taxon>Burkholderiaceae</taxon>
        <taxon>Burkholderia</taxon>
        <taxon>pseudomallei group</taxon>
    </lineage>
</organism>
<comment type="function">
    <text evidence="1">Plays a role in cell envelope biogenesis, maintenance of cell envelope integrity and membrane homeostasis.</text>
</comment>
<comment type="subcellular location">
    <subcellularLocation>
        <location evidence="1">Cell inner membrane</location>
        <topology evidence="1">Multi-pass membrane protein</topology>
    </subcellularLocation>
</comment>
<comment type="similarity">
    <text evidence="1">Belongs to the YciB family.</text>
</comment>
<dbReference type="EMBL" id="CP000572">
    <property type="protein sequence ID" value="ABN89746.1"/>
    <property type="molecule type" value="Genomic_DNA"/>
</dbReference>
<dbReference type="RefSeq" id="WP_004192037.1">
    <property type="nucleotide sequence ID" value="NC_009076.1"/>
</dbReference>
<dbReference type="KEGG" id="bpl:BURPS1106A_2338"/>
<dbReference type="HOGENOM" id="CLU_089554_2_0_4"/>
<dbReference type="Proteomes" id="UP000006738">
    <property type="component" value="Chromosome I"/>
</dbReference>
<dbReference type="GO" id="GO:0005886">
    <property type="term" value="C:plasma membrane"/>
    <property type="evidence" value="ECO:0007669"/>
    <property type="project" value="UniProtKB-SubCell"/>
</dbReference>
<dbReference type="HAMAP" id="MF_00189">
    <property type="entry name" value="YciB"/>
    <property type="match status" value="1"/>
</dbReference>
<dbReference type="InterPro" id="IPR006008">
    <property type="entry name" value="YciB"/>
</dbReference>
<dbReference type="NCBIfam" id="TIGR00997">
    <property type="entry name" value="ispZ"/>
    <property type="match status" value="1"/>
</dbReference>
<dbReference type="NCBIfam" id="NF001325">
    <property type="entry name" value="PRK00259.1-3"/>
    <property type="match status" value="1"/>
</dbReference>
<dbReference type="PANTHER" id="PTHR36917:SF1">
    <property type="entry name" value="INNER MEMBRANE-SPANNING PROTEIN YCIB"/>
    <property type="match status" value="1"/>
</dbReference>
<dbReference type="PANTHER" id="PTHR36917">
    <property type="entry name" value="INTRACELLULAR SEPTATION PROTEIN A-RELATED"/>
    <property type="match status" value="1"/>
</dbReference>
<dbReference type="Pfam" id="PF04279">
    <property type="entry name" value="IspA"/>
    <property type="match status" value="1"/>
</dbReference>
<gene>
    <name evidence="1" type="primary">yciB</name>
    <name type="ordered locus">BURPS1106A_2338</name>
</gene>
<sequence length="176" mass="20017">MKFLFDLFPIILFFAAFKLWGIFTATAVAIAATLAQVAWVAFRHRKVDTMLWVSLGVIVVFGGATLVLHDEKFIQWKPTVLYWLFAVGLVAARYAFGKNLIEKMMGKQLTLPEPVWDKLNLAWAAFFAALGVTNLYVVRNFTESQWVNFKLFGTTGAIVVFVILQSLWLAKYLKEE</sequence>
<reference key="1">
    <citation type="journal article" date="2010" name="Genome Biol. Evol.">
        <title>Continuing evolution of Burkholderia mallei through genome reduction and large-scale rearrangements.</title>
        <authorList>
            <person name="Losada L."/>
            <person name="Ronning C.M."/>
            <person name="DeShazer D."/>
            <person name="Woods D."/>
            <person name="Fedorova N."/>
            <person name="Kim H.S."/>
            <person name="Shabalina S.A."/>
            <person name="Pearson T.R."/>
            <person name="Brinkac L."/>
            <person name="Tan P."/>
            <person name="Nandi T."/>
            <person name="Crabtree J."/>
            <person name="Badger J."/>
            <person name="Beckstrom-Sternberg S."/>
            <person name="Saqib M."/>
            <person name="Schutzer S.E."/>
            <person name="Keim P."/>
            <person name="Nierman W.C."/>
        </authorList>
    </citation>
    <scope>NUCLEOTIDE SEQUENCE [LARGE SCALE GENOMIC DNA]</scope>
    <source>
        <strain>1106a</strain>
    </source>
</reference>
<evidence type="ECO:0000255" key="1">
    <source>
        <dbReference type="HAMAP-Rule" id="MF_00189"/>
    </source>
</evidence>
<accession>A3NW81</accession>
<name>YCIB_BURP0</name>
<proteinExistence type="inferred from homology"/>
<keyword id="KW-0997">Cell inner membrane</keyword>
<keyword id="KW-1003">Cell membrane</keyword>
<keyword id="KW-0472">Membrane</keyword>
<keyword id="KW-0812">Transmembrane</keyword>
<keyword id="KW-1133">Transmembrane helix</keyword>
<feature type="chain" id="PRO_1000020996" description="Inner membrane-spanning protein YciB">
    <location>
        <begin position="1"/>
        <end position="176"/>
    </location>
</feature>
<feature type="transmembrane region" description="Helical" evidence="1">
    <location>
        <begin position="3"/>
        <end position="23"/>
    </location>
</feature>
<feature type="transmembrane region" description="Helical" evidence="1">
    <location>
        <begin position="49"/>
        <end position="69"/>
    </location>
</feature>
<feature type="transmembrane region" description="Helical" evidence="1">
    <location>
        <begin position="72"/>
        <end position="92"/>
    </location>
</feature>
<feature type="transmembrane region" description="Helical" evidence="1">
    <location>
        <begin position="118"/>
        <end position="138"/>
    </location>
</feature>
<feature type="transmembrane region" description="Helical" evidence="1">
    <location>
        <begin position="149"/>
        <end position="169"/>
    </location>
</feature>